<comment type="function">
    <text evidence="1">Can catalyze the hydrolysis of ATP in the presence of single-stranded DNA, the ATP-dependent uptake of single-stranded DNA by duplex DNA, and the ATP-dependent hybridization of homologous single-stranded DNAs. It interacts with LexA causing its activation and leading to its autocatalytic cleavage.</text>
</comment>
<comment type="subcellular location">
    <subcellularLocation>
        <location evidence="1">Cytoplasm</location>
    </subcellularLocation>
</comment>
<comment type="similarity">
    <text evidence="1">Belongs to the RecA family.</text>
</comment>
<sequence>MTAEKSKALAAALAQIEKQFGKGSIMRMGDGEATENIQVVSTGSLGLDIALGVGGLPRGRVVEIYGPESSGKTTLTLQVIAELQKIGGTAAFIDAEHALDVQYAAKLGVNVPELLISQPDTGEQALEITDALVRSGSIDMIVIDSVAALVPKAEIEGEMGDSLPGLQARLMSQALRKLTGTIKRTNCLVIFINQIRMKIGVMFGNPETTTGGNALKFYSSVRLDIRRIGSIKKNDEVIGNETRVKVVKNKVSPPFREAIFDILYGEGISRQGEIIDLGVQAKIVDKAGAWYSYNGEKIGQGKDNAREFLRENPEIAREIENRIRESLGVVAMPDGAGQDEAEAMDEEE</sequence>
<gene>
    <name evidence="1" type="primary">recA</name>
    <name type="ordered locus">Bcep18194_A5979</name>
</gene>
<proteinExistence type="inferred from homology"/>
<organism>
    <name type="scientific">Burkholderia lata (strain ATCC 17760 / DSM 23089 / LMG 22485 / NCIMB 9086 / R18194 / 383)</name>
    <dbReference type="NCBI Taxonomy" id="482957"/>
    <lineage>
        <taxon>Bacteria</taxon>
        <taxon>Pseudomonadati</taxon>
        <taxon>Pseudomonadota</taxon>
        <taxon>Betaproteobacteria</taxon>
        <taxon>Burkholderiales</taxon>
        <taxon>Burkholderiaceae</taxon>
        <taxon>Burkholderia</taxon>
        <taxon>Burkholderia cepacia complex</taxon>
    </lineage>
</organism>
<keyword id="KW-0067">ATP-binding</keyword>
<keyword id="KW-0963">Cytoplasm</keyword>
<keyword id="KW-0227">DNA damage</keyword>
<keyword id="KW-0233">DNA recombination</keyword>
<keyword id="KW-0234">DNA repair</keyword>
<keyword id="KW-0238">DNA-binding</keyword>
<keyword id="KW-0547">Nucleotide-binding</keyword>
<keyword id="KW-0742">SOS response</keyword>
<protein>
    <recommendedName>
        <fullName evidence="1">Protein RecA</fullName>
    </recommendedName>
    <alternativeName>
        <fullName evidence="1">Recombinase A</fullName>
    </alternativeName>
</protein>
<name>RECA_BURL3</name>
<reference key="1">
    <citation type="submission" date="2005-10" db="EMBL/GenBank/DDBJ databases">
        <title>Complete sequence of chromosome 1 of Burkholderia sp. 383.</title>
        <authorList>
            <consortium name="US DOE Joint Genome Institute"/>
            <person name="Copeland A."/>
            <person name="Lucas S."/>
            <person name="Lapidus A."/>
            <person name="Barry K."/>
            <person name="Detter J.C."/>
            <person name="Glavina T."/>
            <person name="Hammon N."/>
            <person name="Israni S."/>
            <person name="Pitluck S."/>
            <person name="Chain P."/>
            <person name="Malfatti S."/>
            <person name="Shin M."/>
            <person name="Vergez L."/>
            <person name="Schmutz J."/>
            <person name="Larimer F."/>
            <person name="Land M."/>
            <person name="Kyrpides N."/>
            <person name="Lykidis A."/>
            <person name="Richardson P."/>
        </authorList>
    </citation>
    <scope>NUCLEOTIDE SEQUENCE [LARGE SCALE GENOMIC DNA]</scope>
    <source>
        <strain>ATCC 17760 / DSM 23089 / LMG 22485 / NCIMB 9086 / R18194 / 383</strain>
    </source>
</reference>
<dbReference type="EMBL" id="CP000151">
    <property type="protein sequence ID" value="ABB09573.1"/>
    <property type="molecule type" value="Genomic_DNA"/>
</dbReference>
<dbReference type="SMR" id="Q39D93"/>
<dbReference type="KEGG" id="bur:Bcep18194_A5979"/>
<dbReference type="PATRIC" id="fig|482957.22.peg.2976"/>
<dbReference type="HOGENOM" id="CLU_040469_3_2_4"/>
<dbReference type="Proteomes" id="UP000002705">
    <property type="component" value="Chromosome 1"/>
</dbReference>
<dbReference type="GO" id="GO:0005829">
    <property type="term" value="C:cytosol"/>
    <property type="evidence" value="ECO:0007669"/>
    <property type="project" value="TreeGrafter"/>
</dbReference>
<dbReference type="GO" id="GO:0005524">
    <property type="term" value="F:ATP binding"/>
    <property type="evidence" value="ECO:0007669"/>
    <property type="project" value="UniProtKB-UniRule"/>
</dbReference>
<dbReference type="GO" id="GO:0016887">
    <property type="term" value="F:ATP hydrolysis activity"/>
    <property type="evidence" value="ECO:0007669"/>
    <property type="project" value="InterPro"/>
</dbReference>
<dbReference type="GO" id="GO:0140664">
    <property type="term" value="F:ATP-dependent DNA damage sensor activity"/>
    <property type="evidence" value="ECO:0007669"/>
    <property type="project" value="InterPro"/>
</dbReference>
<dbReference type="GO" id="GO:0003684">
    <property type="term" value="F:damaged DNA binding"/>
    <property type="evidence" value="ECO:0007669"/>
    <property type="project" value="UniProtKB-UniRule"/>
</dbReference>
<dbReference type="GO" id="GO:0003697">
    <property type="term" value="F:single-stranded DNA binding"/>
    <property type="evidence" value="ECO:0007669"/>
    <property type="project" value="UniProtKB-UniRule"/>
</dbReference>
<dbReference type="GO" id="GO:0006310">
    <property type="term" value="P:DNA recombination"/>
    <property type="evidence" value="ECO:0007669"/>
    <property type="project" value="UniProtKB-UniRule"/>
</dbReference>
<dbReference type="GO" id="GO:0006281">
    <property type="term" value="P:DNA repair"/>
    <property type="evidence" value="ECO:0007669"/>
    <property type="project" value="UniProtKB-UniRule"/>
</dbReference>
<dbReference type="GO" id="GO:0009432">
    <property type="term" value="P:SOS response"/>
    <property type="evidence" value="ECO:0007669"/>
    <property type="project" value="UniProtKB-UniRule"/>
</dbReference>
<dbReference type="CDD" id="cd00983">
    <property type="entry name" value="RecA"/>
    <property type="match status" value="1"/>
</dbReference>
<dbReference type="FunFam" id="3.40.50.300:FF:000087">
    <property type="entry name" value="Recombinase RecA"/>
    <property type="match status" value="1"/>
</dbReference>
<dbReference type="Gene3D" id="3.40.50.300">
    <property type="entry name" value="P-loop containing nucleotide triphosphate hydrolases"/>
    <property type="match status" value="1"/>
</dbReference>
<dbReference type="HAMAP" id="MF_00268">
    <property type="entry name" value="RecA"/>
    <property type="match status" value="1"/>
</dbReference>
<dbReference type="InterPro" id="IPR003593">
    <property type="entry name" value="AAA+_ATPase"/>
</dbReference>
<dbReference type="InterPro" id="IPR013765">
    <property type="entry name" value="DNA_recomb/repair_RecA"/>
</dbReference>
<dbReference type="InterPro" id="IPR020584">
    <property type="entry name" value="DNA_recomb/repair_RecA_CS"/>
</dbReference>
<dbReference type="InterPro" id="IPR027417">
    <property type="entry name" value="P-loop_NTPase"/>
</dbReference>
<dbReference type="InterPro" id="IPR049261">
    <property type="entry name" value="RecA-like_C"/>
</dbReference>
<dbReference type="InterPro" id="IPR049428">
    <property type="entry name" value="RecA-like_N"/>
</dbReference>
<dbReference type="InterPro" id="IPR020588">
    <property type="entry name" value="RecA_ATP-bd"/>
</dbReference>
<dbReference type="InterPro" id="IPR023400">
    <property type="entry name" value="RecA_C_sf"/>
</dbReference>
<dbReference type="InterPro" id="IPR020587">
    <property type="entry name" value="RecA_monomer-monomer_interface"/>
</dbReference>
<dbReference type="NCBIfam" id="TIGR02012">
    <property type="entry name" value="tigrfam_recA"/>
    <property type="match status" value="1"/>
</dbReference>
<dbReference type="PANTHER" id="PTHR45900:SF1">
    <property type="entry name" value="MITOCHONDRIAL DNA REPAIR PROTEIN RECA HOMOLOG-RELATED"/>
    <property type="match status" value="1"/>
</dbReference>
<dbReference type="PANTHER" id="PTHR45900">
    <property type="entry name" value="RECA"/>
    <property type="match status" value="1"/>
</dbReference>
<dbReference type="Pfam" id="PF00154">
    <property type="entry name" value="RecA"/>
    <property type="match status" value="1"/>
</dbReference>
<dbReference type="Pfam" id="PF21096">
    <property type="entry name" value="RecA_C"/>
    <property type="match status" value="1"/>
</dbReference>
<dbReference type="PRINTS" id="PR00142">
    <property type="entry name" value="RECA"/>
</dbReference>
<dbReference type="SMART" id="SM00382">
    <property type="entry name" value="AAA"/>
    <property type="match status" value="1"/>
</dbReference>
<dbReference type="SUPFAM" id="SSF52540">
    <property type="entry name" value="P-loop containing nucleoside triphosphate hydrolases"/>
    <property type="match status" value="1"/>
</dbReference>
<dbReference type="SUPFAM" id="SSF54752">
    <property type="entry name" value="RecA protein, C-terminal domain"/>
    <property type="match status" value="1"/>
</dbReference>
<dbReference type="PROSITE" id="PS00321">
    <property type="entry name" value="RECA_1"/>
    <property type="match status" value="1"/>
</dbReference>
<dbReference type="PROSITE" id="PS50162">
    <property type="entry name" value="RECA_2"/>
    <property type="match status" value="1"/>
</dbReference>
<dbReference type="PROSITE" id="PS50163">
    <property type="entry name" value="RECA_3"/>
    <property type="match status" value="1"/>
</dbReference>
<accession>Q39D93</accession>
<evidence type="ECO:0000255" key="1">
    <source>
        <dbReference type="HAMAP-Rule" id="MF_00268"/>
    </source>
</evidence>
<feature type="chain" id="PRO_1000047894" description="Protein RecA">
    <location>
        <begin position="1"/>
        <end position="348"/>
    </location>
</feature>
<feature type="binding site" evidence="1">
    <location>
        <begin position="66"/>
        <end position="73"/>
    </location>
    <ligand>
        <name>ATP</name>
        <dbReference type="ChEBI" id="CHEBI:30616"/>
    </ligand>
</feature>